<accession>Q6ARL8</accession>
<gene>
    <name evidence="1" type="primary">dnaA</name>
    <name type="ordered locus">DP0278</name>
</gene>
<keyword id="KW-0067">ATP-binding</keyword>
<keyword id="KW-0963">Cytoplasm</keyword>
<keyword id="KW-0235">DNA replication</keyword>
<keyword id="KW-0238">DNA-binding</keyword>
<keyword id="KW-0446">Lipid-binding</keyword>
<keyword id="KW-0547">Nucleotide-binding</keyword>
<keyword id="KW-1185">Reference proteome</keyword>
<organism>
    <name type="scientific">Desulfotalea psychrophila (strain LSv54 / DSM 12343)</name>
    <dbReference type="NCBI Taxonomy" id="177439"/>
    <lineage>
        <taxon>Bacteria</taxon>
        <taxon>Pseudomonadati</taxon>
        <taxon>Thermodesulfobacteriota</taxon>
        <taxon>Desulfobulbia</taxon>
        <taxon>Desulfobulbales</taxon>
        <taxon>Desulfocapsaceae</taxon>
        <taxon>Desulfotalea</taxon>
    </lineage>
</organism>
<dbReference type="EMBL" id="CR522870">
    <property type="protein sequence ID" value="CAG35007.1"/>
    <property type="status" value="ALT_INIT"/>
    <property type="molecule type" value="Genomic_DNA"/>
</dbReference>
<dbReference type="RefSeq" id="WP_041277483.1">
    <property type="nucleotide sequence ID" value="NC_006138.1"/>
</dbReference>
<dbReference type="SMR" id="Q6ARL8"/>
<dbReference type="STRING" id="177439.DP0278"/>
<dbReference type="KEGG" id="dps:DP0278"/>
<dbReference type="eggNOG" id="COG0593">
    <property type="taxonomic scope" value="Bacteria"/>
</dbReference>
<dbReference type="HOGENOM" id="CLU_026910_3_0_7"/>
<dbReference type="Proteomes" id="UP000000602">
    <property type="component" value="Chromosome"/>
</dbReference>
<dbReference type="GO" id="GO:0005737">
    <property type="term" value="C:cytoplasm"/>
    <property type="evidence" value="ECO:0007669"/>
    <property type="project" value="UniProtKB-SubCell"/>
</dbReference>
<dbReference type="GO" id="GO:0005886">
    <property type="term" value="C:plasma membrane"/>
    <property type="evidence" value="ECO:0007669"/>
    <property type="project" value="TreeGrafter"/>
</dbReference>
<dbReference type="GO" id="GO:0005524">
    <property type="term" value="F:ATP binding"/>
    <property type="evidence" value="ECO:0007669"/>
    <property type="project" value="UniProtKB-UniRule"/>
</dbReference>
<dbReference type="GO" id="GO:0016887">
    <property type="term" value="F:ATP hydrolysis activity"/>
    <property type="evidence" value="ECO:0007669"/>
    <property type="project" value="InterPro"/>
</dbReference>
<dbReference type="GO" id="GO:0003688">
    <property type="term" value="F:DNA replication origin binding"/>
    <property type="evidence" value="ECO:0007669"/>
    <property type="project" value="UniProtKB-UniRule"/>
</dbReference>
<dbReference type="GO" id="GO:0008289">
    <property type="term" value="F:lipid binding"/>
    <property type="evidence" value="ECO:0007669"/>
    <property type="project" value="UniProtKB-KW"/>
</dbReference>
<dbReference type="GO" id="GO:0006270">
    <property type="term" value="P:DNA replication initiation"/>
    <property type="evidence" value="ECO:0007669"/>
    <property type="project" value="UniProtKB-UniRule"/>
</dbReference>
<dbReference type="GO" id="GO:0006275">
    <property type="term" value="P:regulation of DNA replication"/>
    <property type="evidence" value="ECO:0007669"/>
    <property type="project" value="UniProtKB-UniRule"/>
</dbReference>
<dbReference type="CDD" id="cd00009">
    <property type="entry name" value="AAA"/>
    <property type="match status" value="1"/>
</dbReference>
<dbReference type="CDD" id="cd06571">
    <property type="entry name" value="Bac_DnaA_C"/>
    <property type="match status" value="1"/>
</dbReference>
<dbReference type="Gene3D" id="1.10.1750.10">
    <property type="match status" value="1"/>
</dbReference>
<dbReference type="Gene3D" id="1.10.8.60">
    <property type="match status" value="1"/>
</dbReference>
<dbReference type="Gene3D" id="3.30.300.180">
    <property type="match status" value="1"/>
</dbReference>
<dbReference type="Gene3D" id="3.40.50.300">
    <property type="entry name" value="P-loop containing nucleotide triphosphate hydrolases"/>
    <property type="match status" value="1"/>
</dbReference>
<dbReference type="HAMAP" id="MF_00377">
    <property type="entry name" value="DnaA_bact"/>
    <property type="match status" value="1"/>
</dbReference>
<dbReference type="InterPro" id="IPR003593">
    <property type="entry name" value="AAA+_ATPase"/>
</dbReference>
<dbReference type="InterPro" id="IPR001957">
    <property type="entry name" value="Chromosome_initiator_DnaA"/>
</dbReference>
<dbReference type="InterPro" id="IPR020591">
    <property type="entry name" value="Chromosome_initiator_DnaA-like"/>
</dbReference>
<dbReference type="InterPro" id="IPR013159">
    <property type="entry name" value="DnaA_C"/>
</dbReference>
<dbReference type="InterPro" id="IPR013317">
    <property type="entry name" value="DnaA_dom"/>
</dbReference>
<dbReference type="InterPro" id="IPR024633">
    <property type="entry name" value="DnaA_N_dom"/>
</dbReference>
<dbReference type="InterPro" id="IPR038454">
    <property type="entry name" value="DnaA_N_sf"/>
</dbReference>
<dbReference type="InterPro" id="IPR027417">
    <property type="entry name" value="P-loop_NTPase"/>
</dbReference>
<dbReference type="InterPro" id="IPR010921">
    <property type="entry name" value="Trp_repressor/repl_initiator"/>
</dbReference>
<dbReference type="NCBIfam" id="TIGR00362">
    <property type="entry name" value="DnaA"/>
    <property type="match status" value="1"/>
</dbReference>
<dbReference type="PANTHER" id="PTHR30050">
    <property type="entry name" value="CHROMOSOMAL REPLICATION INITIATOR PROTEIN DNAA"/>
    <property type="match status" value="1"/>
</dbReference>
<dbReference type="PANTHER" id="PTHR30050:SF2">
    <property type="entry name" value="CHROMOSOMAL REPLICATION INITIATOR PROTEIN DNAA"/>
    <property type="match status" value="1"/>
</dbReference>
<dbReference type="Pfam" id="PF00308">
    <property type="entry name" value="Bac_DnaA"/>
    <property type="match status" value="1"/>
</dbReference>
<dbReference type="Pfam" id="PF08299">
    <property type="entry name" value="Bac_DnaA_C"/>
    <property type="match status" value="1"/>
</dbReference>
<dbReference type="Pfam" id="PF11638">
    <property type="entry name" value="DnaA_N"/>
    <property type="match status" value="1"/>
</dbReference>
<dbReference type="PRINTS" id="PR00051">
    <property type="entry name" value="DNAA"/>
</dbReference>
<dbReference type="SMART" id="SM00382">
    <property type="entry name" value="AAA"/>
    <property type="match status" value="1"/>
</dbReference>
<dbReference type="SMART" id="SM00760">
    <property type="entry name" value="Bac_DnaA_C"/>
    <property type="match status" value="1"/>
</dbReference>
<dbReference type="SUPFAM" id="SSF52540">
    <property type="entry name" value="P-loop containing nucleoside triphosphate hydrolases"/>
    <property type="match status" value="1"/>
</dbReference>
<dbReference type="SUPFAM" id="SSF48295">
    <property type="entry name" value="TrpR-like"/>
    <property type="match status" value="1"/>
</dbReference>
<comment type="function">
    <text evidence="1">Plays an essential role in the initiation and regulation of chromosomal replication. ATP-DnaA binds to the origin of replication (oriC) to initiate formation of the DNA replication initiation complex once per cell cycle. Binds the DnaA box (a 9 base pair repeat at the origin) and separates the double-stranded (ds)DNA. Forms a right-handed helical filament on oriC DNA; dsDNA binds to the exterior of the filament while single-stranded (ss)DNA is stabiized in the filament's interior. The ATP-DnaA-oriC complex binds and stabilizes one strand of the AT-rich DNA unwinding element (DUE), permitting loading of DNA polymerase. After initiation quickly degrades to an ADP-DnaA complex that is not apt for DNA replication. Binds acidic phospholipids.</text>
</comment>
<comment type="subunit">
    <text evidence="1">Oligomerizes as a right-handed, spiral filament on DNA at oriC.</text>
</comment>
<comment type="subcellular location">
    <subcellularLocation>
        <location evidence="1">Cytoplasm</location>
    </subcellularLocation>
</comment>
<comment type="domain">
    <text evidence="1">Domain I is involved in oligomerization and binding regulators, domain II is flexibile and of varying length in different bacteria, domain III forms the AAA+ region, while domain IV binds dsDNA.</text>
</comment>
<comment type="similarity">
    <text evidence="1">Belongs to the DnaA family.</text>
</comment>
<comment type="sequence caution" evidence="2">
    <conflict type="erroneous initiation">
        <sequence resource="EMBL-CDS" id="CAG35007"/>
    </conflict>
</comment>
<feature type="chain" id="PRO_0000114172" description="Chromosomal replication initiator protein DnaA">
    <location>
        <begin position="1"/>
        <end position="479"/>
    </location>
</feature>
<feature type="region of interest" description="Domain I, interacts with DnaA modulators" evidence="1">
    <location>
        <begin position="1"/>
        <end position="74"/>
    </location>
</feature>
<feature type="region of interest" description="Domain II" evidence="1">
    <location>
        <begin position="74"/>
        <end position="142"/>
    </location>
</feature>
<feature type="region of interest" description="Domain III, AAA+ region" evidence="1">
    <location>
        <begin position="143"/>
        <end position="360"/>
    </location>
</feature>
<feature type="region of interest" description="Domain IV, binds dsDNA" evidence="1">
    <location>
        <begin position="361"/>
        <end position="479"/>
    </location>
</feature>
<feature type="binding site" evidence="1">
    <location>
        <position position="187"/>
    </location>
    <ligand>
        <name>ATP</name>
        <dbReference type="ChEBI" id="CHEBI:30616"/>
    </ligand>
</feature>
<feature type="binding site" evidence="1">
    <location>
        <position position="189"/>
    </location>
    <ligand>
        <name>ATP</name>
        <dbReference type="ChEBI" id="CHEBI:30616"/>
    </ligand>
</feature>
<feature type="binding site" evidence="1">
    <location>
        <position position="190"/>
    </location>
    <ligand>
        <name>ATP</name>
        <dbReference type="ChEBI" id="CHEBI:30616"/>
    </ligand>
</feature>
<feature type="binding site" evidence="1">
    <location>
        <position position="191"/>
    </location>
    <ligand>
        <name>ATP</name>
        <dbReference type="ChEBI" id="CHEBI:30616"/>
    </ligand>
</feature>
<evidence type="ECO:0000255" key="1">
    <source>
        <dbReference type="HAMAP-Rule" id="MF_00377"/>
    </source>
</evidence>
<evidence type="ECO:0000305" key="2"/>
<proteinExistence type="inferred from homology"/>
<reference key="1">
    <citation type="journal article" date="2004" name="Environ. Microbiol.">
        <title>The genome of Desulfotalea psychrophila, a sulfate-reducing bacterium from permanently cold Arctic sediments.</title>
        <authorList>
            <person name="Rabus R."/>
            <person name="Ruepp A."/>
            <person name="Frickey T."/>
            <person name="Rattei T."/>
            <person name="Fartmann B."/>
            <person name="Stark M."/>
            <person name="Bauer M."/>
            <person name="Zibat A."/>
            <person name="Lombardot T."/>
            <person name="Becker I."/>
            <person name="Amann J."/>
            <person name="Gellner K."/>
            <person name="Teeling H."/>
            <person name="Leuschner W.D."/>
            <person name="Gloeckner F.-O."/>
            <person name="Lupas A.N."/>
            <person name="Amann R."/>
            <person name="Klenk H.-P."/>
        </authorList>
    </citation>
    <scope>NUCLEOTIDE SEQUENCE [LARGE SCALE GENOMIC DNA]</scope>
    <source>
        <strain>DSM 12343 / LSv54</strain>
    </source>
</reference>
<name>DNAA_DESPS</name>
<protein>
    <recommendedName>
        <fullName evidence="1">Chromosomal replication initiator protein DnaA</fullName>
    </recommendedName>
</protein>
<sequence>MFSGVVMAWQKAQGCLKESLSKDVYSLWIAPLESVRQENGVVSLAGPDRYFIAFVKQNYLKEIERSLTGVDSSITDVRFLEKKAVPQLRSMMHRTSTSAPTFPVPSVSSASTASTASTASSASSVPRQLRLPSVPKNNASIRALHPRYTFDEFMVGQSNILAESACRAISADADTVGPCLYINSGTGLGKSHLTHAVAHHLLSNSPMTRMHYVTAQQFSAEMVHGIKNNSMDMFKKKYQEDCDILLVEDIHTLKGKKKTQEELNEVLDTLVKSGKRVLLTANAAPRELAGIDGEFRSRMSAGLITSIQAPDIKTRSRIVERKAAGQRLSFDEDMTSYLAQNVRGDVRQIESAITAIGARARLMGGYIDMNLIREVVGSVVGCNQSLSSSLIRDLISAQFQVSVEDLQSRSRKKSISLPRQIAMYLSRKFTEESLAEIGRTYKRDHSTVIHSVKVITDKARRDMSLGAQVNLLSDKVKQI</sequence>